<reference key="1">
    <citation type="journal article" date="1994" name="J. Virol.">
        <title>Rearrangement of the VP6 gene of a group A rotavirus in combination with a point mutation affecting trimer stability.</title>
        <authorList>
            <person name="Shen S."/>
            <person name="Burke B."/>
            <person name="Desselberger U."/>
        </authorList>
    </citation>
    <scope>NUCLEOTIDE SEQUENCE [MRNA]</scope>
</reference>
<comment type="function">
    <text evidence="1">Intermediate capsid protein that self assembles to form an icosahedral capsid with a T=13 symmetry, which consists of 230 trimers of VP6, with channels at each of its five-fold vertices. This capsid constitutes the middle concentric layer of the viral mature particle. The innermost VP2 capsid and the intermediate VP6 capsid remain intact following cell entry to protect the dsRNA from degradation and to prevent unfavorable antiviral responses in the host cell during all the replication cycle of the virus. Nascent transcripts are transcribed within the structural confines of this double-layered particle (DLP) and are extruded through the channels at the five-fold axes. VP6 is required for the transcription activity of the DLP.</text>
</comment>
<comment type="subunit">
    <text evidence="1">Homotrimer. Interacts with the inner capsid protein VP2. Interacts with the outer capsid glycoprotein VP7. Interacts with the outer capsid protein VP5*.</text>
</comment>
<comment type="subcellular location">
    <subcellularLocation>
        <location evidence="1">Virion</location>
    </subcellularLocation>
    <text evidence="1">Component of the intermediate capsid. Also found in spherical cytoplasmic structures, called virus factories, that appear early after infection and are the site of viral replication and packaging.</text>
</comment>
<comment type="PTM">
    <text evidence="1">The N-terminus is blocked.</text>
</comment>
<comment type="PTM">
    <text evidence="1">Sumoylated with SUMO1 and SUMO2. Sumoylation of viral proteins seems to have a positive role on viral replication.</text>
</comment>
<comment type="miscellaneous">
    <text evidence="1">The VP6 trimer contains a zinc ion located at the center of the molecule. The zinc ion is not essential for either trimerization or transcription activity of the DLP. Zinc-depleted VP6 has an increased sensitivity to proteases.</text>
</comment>
<comment type="similarity">
    <text evidence="1">Belongs to the rotavirus VP6 family.</text>
</comment>
<protein>
    <recommendedName>
        <fullName evidence="1">Intermediate capsid protein VP6</fullName>
    </recommendedName>
</protein>
<evidence type="ECO:0000255" key="1">
    <source>
        <dbReference type="HAMAP-Rule" id="MF_04129"/>
    </source>
</evidence>
<proteinExistence type="evidence at transcript level"/>
<organismHost>
    <name type="scientific">Mus musculus musculus</name>
    <name type="common">eastern European house mouse</name>
    <dbReference type="NCBI Taxonomy" id="39442"/>
</organismHost>
<sequence length="397" mass="44899">MDVLYSLSKTLKDARDKIVEGTLYSNVSDLIQQFNQMIVTMNGNEFQTGGIGNLPIRNWNFDFGLLGTTLLNLDANYVETARNTIDYFVDFVDNVCMDEMVRESQRNGIAPQSESLRKLSGIKFKRINFDNSSEYIENWNLQNRRQRTGFTFHKPNIFPYSASFTLNRSQPAHDNLMGTMWLNAGSEIQVAGFDYSCAINAPANTQQFEHIVQLRRVLTTATITLLPDAERFSFPRVINSADGATTWYFNPVILRPNNVEVEFLLNGQIINTYQARFGTIIARNFDTIRLSFQLMRPPNMTPAVAALFPNAQPFEHHATVGLTLRIESAVCESVLADASETMLANVTSVRQEYAIPVGPVFPPGMNWTDLITNYSPSREDNLQRVFTVASIRSMLIK</sequence>
<organism>
    <name type="scientific">Rotavirus A (isolate RVA/Sheep/China/lp14/1981/G10P[15])</name>
    <name type="common">RV-A</name>
    <dbReference type="NCBI Taxonomy" id="578838"/>
    <lineage>
        <taxon>Viruses</taxon>
        <taxon>Riboviria</taxon>
        <taxon>Orthornavirae</taxon>
        <taxon>Duplornaviricota</taxon>
        <taxon>Resentoviricetes</taxon>
        <taxon>Reovirales</taxon>
        <taxon>Sedoreoviridae</taxon>
        <taxon>Rotavirus</taxon>
        <taxon>Rotavirus A</taxon>
    </lineage>
</organism>
<dbReference type="EMBL" id="L11595">
    <property type="protein sequence ID" value="AAA17846.1"/>
    <property type="molecule type" value="Unassigned_RNA"/>
</dbReference>
<dbReference type="SMR" id="Q86219"/>
<dbReference type="GO" id="GO:0019031">
    <property type="term" value="C:viral envelope"/>
    <property type="evidence" value="ECO:0007669"/>
    <property type="project" value="UniProtKB-UniRule"/>
</dbReference>
<dbReference type="GO" id="GO:0039626">
    <property type="term" value="C:viral intermediate capsid"/>
    <property type="evidence" value="ECO:0007669"/>
    <property type="project" value="UniProtKB-UniRule"/>
</dbReference>
<dbReference type="GO" id="GO:0046789">
    <property type="term" value="F:host cell surface receptor binding"/>
    <property type="evidence" value="ECO:0007669"/>
    <property type="project" value="UniProtKB-UniRule"/>
</dbReference>
<dbReference type="GO" id="GO:0046872">
    <property type="term" value="F:metal ion binding"/>
    <property type="evidence" value="ECO:0007669"/>
    <property type="project" value="UniProtKB-UniRule"/>
</dbReference>
<dbReference type="GO" id="GO:0005198">
    <property type="term" value="F:structural molecule activity"/>
    <property type="evidence" value="ECO:0007669"/>
    <property type="project" value="UniProtKB-UniRule"/>
</dbReference>
<dbReference type="GO" id="GO:0019064">
    <property type="term" value="P:fusion of virus membrane with host plasma membrane"/>
    <property type="evidence" value="ECO:0007669"/>
    <property type="project" value="UniProtKB-UniRule"/>
</dbReference>
<dbReference type="FunFam" id="2.60.120.170:FF:000001">
    <property type="entry name" value="Intermediate capsid protein VP6"/>
    <property type="match status" value="1"/>
</dbReference>
<dbReference type="Gene3D" id="2.60.120.170">
    <property type="match status" value="1"/>
</dbReference>
<dbReference type="Gene3D" id="1.10.1350.10">
    <property type="entry name" value="Viral capsid alpha domain"/>
    <property type="match status" value="1"/>
</dbReference>
<dbReference type="HAMAP" id="MF_04126">
    <property type="entry name" value="Rota_VP6"/>
    <property type="match status" value="1"/>
</dbReference>
<dbReference type="HAMAP" id="MF_04129">
    <property type="entry name" value="Rota_VP6_A"/>
    <property type="match status" value="1"/>
</dbReference>
<dbReference type="InterPro" id="IPR008980">
    <property type="entry name" value="Capsid_hemagglutn"/>
</dbReference>
<dbReference type="InterPro" id="IPR001385">
    <property type="entry name" value="Rotavirus_A/C_VP6"/>
</dbReference>
<dbReference type="InterPro" id="IPR008935">
    <property type="entry name" value="Virus_capsid_a-hlx_vir"/>
</dbReference>
<dbReference type="Pfam" id="PF00980">
    <property type="entry name" value="Rota_Capsid_VP6"/>
    <property type="match status" value="1"/>
</dbReference>
<dbReference type="SUPFAM" id="SSF48345">
    <property type="entry name" value="A virus capsid protein alpha-helical domain"/>
    <property type="match status" value="1"/>
</dbReference>
<dbReference type="SUPFAM" id="SSF49818">
    <property type="entry name" value="Viral protein domain"/>
    <property type="match status" value="1"/>
</dbReference>
<name>VP6_ROTLP</name>
<feature type="chain" id="PRO_0000368171" description="Intermediate capsid protein VP6">
    <location>
        <begin position="1"/>
        <end position="397"/>
    </location>
</feature>
<feature type="region of interest" description="Interaction with the inner capsid protein VP2" evidence="1">
    <location>
        <begin position="62"/>
        <end position="73"/>
    </location>
</feature>
<feature type="binding site" evidence="1">
    <location>
        <position position="153"/>
    </location>
    <ligand>
        <name>Zn(2+)</name>
        <dbReference type="ChEBI" id="CHEBI:29105"/>
        <note>ligand shared between all trimeric partners</note>
    </ligand>
</feature>
<feature type="binding site" evidence="1">
    <location>
        <position position="266"/>
    </location>
    <ligand>
        <name>Ca(2+)</name>
        <dbReference type="ChEBI" id="CHEBI:29108"/>
    </ligand>
</feature>
<feature type="binding site" evidence="1">
    <location>
        <position position="286"/>
    </location>
    <ligand>
        <name>Ca(2+)</name>
        <dbReference type="ChEBI" id="CHEBI:29108"/>
    </ligand>
</feature>
<keyword id="KW-0106">Calcium</keyword>
<keyword id="KW-0167">Capsid protein</keyword>
<keyword id="KW-1154">Intermediate capsid protein</keyword>
<keyword id="KW-0479">Metal-binding</keyword>
<keyword id="KW-0832">Ubl conjugation</keyword>
<keyword id="KW-0946">Virion</keyword>
<keyword id="KW-0862">Zinc</keyword>
<accession>Q86219</accession>